<keyword id="KW-0067">ATP-binding</keyword>
<keyword id="KW-0143">Chaperone</keyword>
<keyword id="KW-0479">Metal-binding</keyword>
<keyword id="KW-0547">Nucleotide-binding</keyword>
<keyword id="KW-1185">Reference proteome</keyword>
<keyword id="KW-0862">Zinc</keyword>
<organism>
    <name type="scientific">Coxiella burnetii (strain RSA 493 / Nine Mile phase I)</name>
    <dbReference type="NCBI Taxonomy" id="227377"/>
    <lineage>
        <taxon>Bacteria</taxon>
        <taxon>Pseudomonadati</taxon>
        <taxon>Pseudomonadota</taxon>
        <taxon>Gammaproteobacteria</taxon>
        <taxon>Legionellales</taxon>
        <taxon>Coxiellaceae</taxon>
        <taxon>Coxiella</taxon>
    </lineage>
</organism>
<evidence type="ECO:0000255" key="1">
    <source>
        <dbReference type="HAMAP-Rule" id="MF_00175"/>
    </source>
</evidence>
<evidence type="ECO:0000255" key="2">
    <source>
        <dbReference type="PROSITE-ProRule" id="PRU01250"/>
    </source>
</evidence>
<proteinExistence type="inferred from homology"/>
<comment type="function">
    <text evidence="1">ATP-dependent specificity component of the Clp protease. It directs the protease to specific substrates. Can perform chaperone functions in the absence of ClpP.</text>
</comment>
<comment type="subunit">
    <text evidence="1">Component of the ClpX-ClpP complex. Forms a hexameric ring that, in the presence of ATP, binds to fourteen ClpP subunits assembled into a disk-like structure with a central cavity, resembling the structure of eukaryotic proteasomes.</text>
</comment>
<comment type="similarity">
    <text evidence="1">Belongs to the ClpX chaperone family.</text>
</comment>
<protein>
    <recommendedName>
        <fullName evidence="1">ATP-dependent Clp protease ATP-binding subunit ClpX</fullName>
    </recommendedName>
</protein>
<gene>
    <name evidence="1" type="primary">clpX</name>
    <name type="ordered locus">CBU_0739</name>
</gene>
<dbReference type="EMBL" id="AE016828">
    <property type="protein sequence ID" value="AAO90279.1"/>
    <property type="molecule type" value="Genomic_DNA"/>
</dbReference>
<dbReference type="RefSeq" id="NP_819765.1">
    <property type="nucleotide sequence ID" value="NC_002971.4"/>
</dbReference>
<dbReference type="RefSeq" id="WP_005771771.1">
    <property type="nucleotide sequence ID" value="NZ_CCYB01000045.1"/>
</dbReference>
<dbReference type="SMR" id="Q83DJ1"/>
<dbReference type="STRING" id="227377.CBU_0739"/>
<dbReference type="EnsemblBacteria" id="AAO90279">
    <property type="protein sequence ID" value="AAO90279"/>
    <property type="gene ID" value="CBU_0739"/>
</dbReference>
<dbReference type="GeneID" id="1208630"/>
<dbReference type="KEGG" id="cbu:CBU_0739"/>
<dbReference type="PATRIC" id="fig|227377.7.peg.723"/>
<dbReference type="eggNOG" id="COG1219">
    <property type="taxonomic scope" value="Bacteria"/>
</dbReference>
<dbReference type="HOGENOM" id="CLU_014218_8_2_6"/>
<dbReference type="OrthoDB" id="9804062at2"/>
<dbReference type="Proteomes" id="UP000002671">
    <property type="component" value="Chromosome"/>
</dbReference>
<dbReference type="GO" id="GO:0009376">
    <property type="term" value="C:HslUV protease complex"/>
    <property type="evidence" value="ECO:0000318"/>
    <property type="project" value="GO_Central"/>
</dbReference>
<dbReference type="GO" id="GO:0005524">
    <property type="term" value="F:ATP binding"/>
    <property type="evidence" value="ECO:0000318"/>
    <property type="project" value="GO_Central"/>
</dbReference>
<dbReference type="GO" id="GO:0016887">
    <property type="term" value="F:ATP hydrolysis activity"/>
    <property type="evidence" value="ECO:0000318"/>
    <property type="project" value="GO_Central"/>
</dbReference>
<dbReference type="GO" id="GO:0140662">
    <property type="term" value="F:ATP-dependent protein folding chaperone"/>
    <property type="evidence" value="ECO:0007669"/>
    <property type="project" value="InterPro"/>
</dbReference>
<dbReference type="GO" id="GO:0046983">
    <property type="term" value="F:protein dimerization activity"/>
    <property type="evidence" value="ECO:0007669"/>
    <property type="project" value="InterPro"/>
</dbReference>
<dbReference type="GO" id="GO:0051082">
    <property type="term" value="F:unfolded protein binding"/>
    <property type="evidence" value="ECO:0007669"/>
    <property type="project" value="UniProtKB-UniRule"/>
</dbReference>
<dbReference type="GO" id="GO:0008270">
    <property type="term" value="F:zinc ion binding"/>
    <property type="evidence" value="ECO:0007669"/>
    <property type="project" value="InterPro"/>
</dbReference>
<dbReference type="GO" id="GO:0051301">
    <property type="term" value="P:cell division"/>
    <property type="evidence" value="ECO:0000318"/>
    <property type="project" value="GO_Central"/>
</dbReference>
<dbReference type="GO" id="GO:0051603">
    <property type="term" value="P:proteolysis involved in protein catabolic process"/>
    <property type="evidence" value="ECO:0000318"/>
    <property type="project" value="GO_Central"/>
</dbReference>
<dbReference type="CDD" id="cd19497">
    <property type="entry name" value="RecA-like_ClpX"/>
    <property type="match status" value="1"/>
</dbReference>
<dbReference type="FunFam" id="1.10.8.60:FF:000002">
    <property type="entry name" value="ATP-dependent Clp protease ATP-binding subunit ClpX"/>
    <property type="match status" value="1"/>
</dbReference>
<dbReference type="FunFam" id="3.40.50.300:FF:000005">
    <property type="entry name" value="ATP-dependent Clp protease ATP-binding subunit ClpX"/>
    <property type="match status" value="1"/>
</dbReference>
<dbReference type="Gene3D" id="1.10.8.60">
    <property type="match status" value="1"/>
</dbReference>
<dbReference type="Gene3D" id="6.20.220.10">
    <property type="entry name" value="ClpX chaperone, C4-type zinc finger domain"/>
    <property type="match status" value="1"/>
</dbReference>
<dbReference type="Gene3D" id="3.40.50.300">
    <property type="entry name" value="P-loop containing nucleotide triphosphate hydrolases"/>
    <property type="match status" value="1"/>
</dbReference>
<dbReference type="HAMAP" id="MF_00175">
    <property type="entry name" value="ClpX"/>
    <property type="match status" value="1"/>
</dbReference>
<dbReference type="InterPro" id="IPR003593">
    <property type="entry name" value="AAA+_ATPase"/>
</dbReference>
<dbReference type="InterPro" id="IPR050052">
    <property type="entry name" value="ATP-dep_Clp_protease_ClpX"/>
</dbReference>
<dbReference type="InterPro" id="IPR003959">
    <property type="entry name" value="ATPase_AAA_core"/>
</dbReference>
<dbReference type="InterPro" id="IPR019489">
    <property type="entry name" value="Clp_ATPase_C"/>
</dbReference>
<dbReference type="InterPro" id="IPR004487">
    <property type="entry name" value="Clp_protease_ATP-bd_su_ClpX"/>
</dbReference>
<dbReference type="InterPro" id="IPR046425">
    <property type="entry name" value="ClpX_bact"/>
</dbReference>
<dbReference type="InterPro" id="IPR027417">
    <property type="entry name" value="P-loop_NTPase"/>
</dbReference>
<dbReference type="InterPro" id="IPR010603">
    <property type="entry name" value="Znf_CppX_C4"/>
</dbReference>
<dbReference type="InterPro" id="IPR038366">
    <property type="entry name" value="Znf_CppX_C4_sf"/>
</dbReference>
<dbReference type="NCBIfam" id="TIGR00382">
    <property type="entry name" value="clpX"/>
    <property type="match status" value="1"/>
</dbReference>
<dbReference type="NCBIfam" id="NF003745">
    <property type="entry name" value="PRK05342.1"/>
    <property type="match status" value="1"/>
</dbReference>
<dbReference type="PANTHER" id="PTHR48102:SF7">
    <property type="entry name" value="ATP-DEPENDENT CLP PROTEASE ATP-BINDING SUBUNIT CLPX-LIKE, MITOCHONDRIAL"/>
    <property type="match status" value="1"/>
</dbReference>
<dbReference type="PANTHER" id="PTHR48102">
    <property type="entry name" value="ATP-DEPENDENT CLP PROTEASE ATP-BINDING SUBUNIT CLPX-LIKE, MITOCHONDRIAL-RELATED"/>
    <property type="match status" value="1"/>
</dbReference>
<dbReference type="Pfam" id="PF07724">
    <property type="entry name" value="AAA_2"/>
    <property type="match status" value="1"/>
</dbReference>
<dbReference type="Pfam" id="PF10431">
    <property type="entry name" value="ClpB_D2-small"/>
    <property type="match status" value="1"/>
</dbReference>
<dbReference type="Pfam" id="PF06689">
    <property type="entry name" value="zf-C4_ClpX"/>
    <property type="match status" value="1"/>
</dbReference>
<dbReference type="SMART" id="SM00382">
    <property type="entry name" value="AAA"/>
    <property type="match status" value="1"/>
</dbReference>
<dbReference type="SMART" id="SM01086">
    <property type="entry name" value="ClpB_D2-small"/>
    <property type="match status" value="1"/>
</dbReference>
<dbReference type="SMART" id="SM00994">
    <property type="entry name" value="zf-C4_ClpX"/>
    <property type="match status" value="1"/>
</dbReference>
<dbReference type="SUPFAM" id="SSF57716">
    <property type="entry name" value="Glucocorticoid receptor-like (DNA-binding domain)"/>
    <property type="match status" value="1"/>
</dbReference>
<dbReference type="SUPFAM" id="SSF52540">
    <property type="entry name" value="P-loop containing nucleoside triphosphate hydrolases"/>
    <property type="match status" value="1"/>
</dbReference>
<dbReference type="PROSITE" id="PS51902">
    <property type="entry name" value="CLPX_ZB"/>
    <property type="match status" value="1"/>
</dbReference>
<name>CLPX_COXBU</name>
<sequence>MSSDEKLQILYCSFCGKSQHQVRKLIAGPAVFVCNECVDLCNDIIREEEIAQAGGAQKKLPTPPEIHRMLDEYVIGQEFAKKVLSVAVYNHYKRLGNQTKKDSVEISKSNILLIGPTGSGKTLLAQTLAKILDVPFAIADATTLTEAGYVGEDVENIIQKLLQKCNYDVEKAKTGIIYIDEIDKIARKTDSPSLTRDVSGEGVQQALLKLIEGTVASIPPQGGRKHPQQEYLQVDTSNILFICGGAFADLHKIIQRRTDKSGIGFAAEVRPKEDFSREASKLIKQTEPGDLIKYGLIPEFVGRLPIITTLEELDEDALMRILTEPKNALVKQYRKLFEFEGVEIDFREDALKAIAKRAIQQKTGARGLRSIVEHTLLDLMYDLPGVAAGLRKVVIDSGVIDQASPPIFIYHHEKASRKVAQE</sequence>
<reference key="1">
    <citation type="journal article" date="2003" name="Proc. Natl. Acad. Sci. U.S.A.">
        <title>Complete genome sequence of the Q-fever pathogen, Coxiella burnetii.</title>
        <authorList>
            <person name="Seshadri R."/>
            <person name="Paulsen I.T."/>
            <person name="Eisen J.A."/>
            <person name="Read T.D."/>
            <person name="Nelson K.E."/>
            <person name="Nelson W.C."/>
            <person name="Ward N.L."/>
            <person name="Tettelin H."/>
            <person name="Davidsen T.M."/>
            <person name="Beanan M.J."/>
            <person name="DeBoy R.T."/>
            <person name="Daugherty S.C."/>
            <person name="Brinkac L.M."/>
            <person name="Madupu R."/>
            <person name="Dodson R.J."/>
            <person name="Khouri H.M."/>
            <person name="Lee K.H."/>
            <person name="Carty H.A."/>
            <person name="Scanlan D."/>
            <person name="Heinzen R.A."/>
            <person name="Thompson H.A."/>
            <person name="Samuel J.E."/>
            <person name="Fraser C.M."/>
            <person name="Heidelberg J.F."/>
        </authorList>
    </citation>
    <scope>NUCLEOTIDE SEQUENCE [LARGE SCALE GENOMIC DNA]</scope>
    <source>
        <strain>RSA 493 / Nine Mile phase I</strain>
    </source>
</reference>
<feature type="chain" id="PRO_0000160348" description="ATP-dependent Clp protease ATP-binding subunit ClpX">
    <location>
        <begin position="1"/>
        <end position="422"/>
    </location>
</feature>
<feature type="domain" description="ClpX-type ZB" evidence="2">
    <location>
        <begin position="1"/>
        <end position="53"/>
    </location>
</feature>
<feature type="binding site" evidence="2">
    <location>
        <position position="12"/>
    </location>
    <ligand>
        <name>Zn(2+)</name>
        <dbReference type="ChEBI" id="CHEBI:29105"/>
    </ligand>
</feature>
<feature type="binding site" evidence="2">
    <location>
        <position position="15"/>
    </location>
    <ligand>
        <name>Zn(2+)</name>
        <dbReference type="ChEBI" id="CHEBI:29105"/>
    </ligand>
</feature>
<feature type="binding site" evidence="2">
    <location>
        <position position="34"/>
    </location>
    <ligand>
        <name>Zn(2+)</name>
        <dbReference type="ChEBI" id="CHEBI:29105"/>
    </ligand>
</feature>
<feature type="binding site" evidence="2">
    <location>
        <position position="37"/>
    </location>
    <ligand>
        <name>Zn(2+)</name>
        <dbReference type="ChEBI" id="CHEBI:29105"/>
    </ligand>
</feature>
<feature type="binding site" evidence="1">
    <location>
        <begin position="116"/>
        <end position="123"/>
    </location>
    <ligand>
        <name>ATP</name>
        <dbReference type="ChEBI" id="CHEBI:30616"/>
    </ligand>
</feature>
<accession>Q83DJ1</accession>